<feature type="chain" id="PRO_1000117038" description="UDP-N-acetylglucosamine--N-acetylmuramyl-(pentapeptide) pyrophosphoryl-undecaprenol N-acetylglucosamine transferase">
    <location>
        <begin position="1"/>
        <end position="353"/>
    </location>
</feature>
<feature type="binding site" evidence="1">
    <location>
        <begin position="14"/>
        <end position="16"/>
    </location>
    <ligand>
        <name>UDP-N-acetyl-alpha-D-glucosamine</name>
        <dbReference type="ChEBI" id="CHEBI:57705"/>
    </ligand>
</feature>
<feature type="binding site" evidence="1">
    <location>
        <position position="126"/>
    </location>
    <ligand>
        <name>UDP-N-acetyl-alpha-D-glucosamine</name>
        <dbReference type="ChEBI" id="CHEBI:57705"/>
    </ligand>
</feature>
<feature type="binding site" evidence="1">
    <location>
        <position position="162"/>
    </location>
    <ligand>
        <name>UDP-N-acetyl-alpha-D-glucosamine</name>
        <dbReference type="ChEBI" id="CHEBI:57705"/>
    </ligand>
</feature>
<feature type="binding site" evidence="1">
    <location>
        <position position="190"/>
    </location>
    <ligand>
        <name>UDP-N-acetyl-alpha-D-glucosamine</name>
        <dbReference type="ChEBI" id="CHEBI:57705"/>
    </ligand>
</feature>
<feature type="binding site" evidence="1">
    <location>
        <position position="243"/>
    </location>
    <ligand>
        <name>UDP-N-acetyl-alpha-D-glucosamine</name>
        <dbReference type="ChEBI" id="CHEBI:57705"/>
    </ligand>
</feature>
<feature type="binding site" evidence="1">
    <location>
        <begin position="262"/>
        <end position="267"/>
    </location>
    <ligand>
        <name>UDP-N-acetyl-alpha-D-glucosamine</name>
        <dbReference type="ChEBI" id="CHEBI:57705"/>
    </ligand>
</feature>
<feature type="binding site" evidence="1">
    <location>
        <position position="287"/>
    </location>
    <ligand>
        <name>UDP-N-acetyl-alpha-D-glucosamine</name>
        <dbReference type="ChEBI" id="CHEBI:57705"/>
    </ligand>
</feature>
<proteinExistence type="inferred from homology"/>
<keyword id="KW-0131">Cell cycle</keyword>
<keyword id="KW-0132">Cell division</keyword>
<keyword id="KW-0997">Cell inner membrane</keyword>
<keyword id="KW-1003">Cell membrane</keyword>
<keyword id="KW-0133">Cell shape</keyword>
<keyword id="KW-0961">Cell wall biogenesis/degradation</keyword>
<keyword id="KW-0328">Glycosyltransferase</keyword>
<keyword id="KW-0472">Membrane</keyword>
<keyword id="KW-0573">Peptidoglycan synthesis</keyword>
<keyword id="KW-0808">Transferase</keyword>
<name>MURG_VIBA3</name>
<accession>B7VJ03</accession>
<comment type="function">
    <text evidence="1">Cell wall formation. Catalyzes the transfer of a GlcNAc subunit on undecaprenyl-pyrophosphoryl-MurNAc-pentapeptide (lipid intermediate I) to form undecaprenyl-pyrophosphoryl-MurNAc-(pentapeptide)GlcNAc (lipid intermediate II).</text>
</comment>
<comment type="catalytic activity">
    <reaction evidence="1">
        <text>di-trans,octa-cis-undecaprenyl diphospho-N-acetyl-alpha-D-muramoyl-L-alanyl-D-glutamyl-meso-2,6-diaminopimeloyl-D-alanyl-D-alanine + UDP-N-acetyl-alpha-D-glucosamine = di-trans,octa-cis-undecaprenyl diphospho-[N-acetyl-alpha-D-glucosaminyl-(1-&gt;4)]-N-acetyl-alpha-D-muramoyl-L-alanyl-D-glutamyl-meso-2,6-diaminopimeloyl-D-alanyl-D-alanine + UDP + H(+)</text>
        <dbReference type="Rhea" id="RHEA:31227"/>
        <dbReference type="ChEBI" id="CHEBI:15378"/>
        <dbReference type="ChEBI" id="CHEBI:57705"/>
        <dbReference type="ChEBI" id="CHEBI:58223"/>
        <dbReference type="ChEBI" id="CHEBI:61387"/>
        <dbReference type="ChEBI" id="CHEBI:61388"/>
        <dbReference type="EC" id="2.4.1.227"/>
    </reaction>
</comment>
<comment type="pathway">
    <text evidence="1">Cell wall biogenesis; peptidoglycan biosynthesis.</text>
</comment>
<comment type="subcellular location">
    <subcellularLocation>
        <location evidence="1">Cell inner membrane</location>
        <topology evidence="1">Peripheral membrane protein</topology>
        <orientation evidence="1">Cytoplasmic side</orientation>
    </subcellularLocation>
</comment>
<comment type="similarity">
    <text evidence="1">Belongs to the glycosyltransferase 28 family. MurG subfamily.</text>
</comment>
<sequence>MKQNKKLLVMAGGTGGHVFPGLAVAKKLQQQGWEIRWLGTADRMEADLVPKHGIEIDFIKVKGLRGQGVSKLIKAPFQIINAILQARRHIKAWQPDVVLGMGGYVSGPGGIAAWLSGIPVVLHEQNAVAGLTNQWLSKIAKKVFQAFPGAFPTAEVVGNPVREDVVALADPEQRMAERDGDIRILVMGGSQGAKILNDTLPVTMAQLGEGFTVVHQAGKNNQQQVIEQYKSHSVDNVQVTEFIDDVAQAYEWADLLVCRSGALTVSEVSAAGVGSIFVPFMHKDRQQALNADHLVECGAALMIEQPQLTADKLANTIAQLDRNELKMMATKARQAAKLDADVTVAEAIKALAK</sequence>
<protein>
    <recommendedName>
        <fullName evidence="1">UDP-N-acetylglucosamine--N-acetylmuramyl-(pentapeptide) pyrophosphoryl-undecaprenol N-acetylglucosamine transferase</fullName>
        <ecNumber evidence="1">2.4.1.227</ecNumber>
    </recommendedName>
    <alternativeName>
        <fullName evidence="1">Undecaprenyl-PP-MurNAc-pentapeptide-UDPGlcNAc GlcNAc transferase</fullName>
    </alternativeName>
</protein>
<gene>
    <name evidence="1" type="primary">murG</name>
    <name type="ordered locus">VS_0450</name>
</gene>
<organism>
    <name type="scientific">Vibrio atlanticus (strain LGP32)</name>
    <name type="common">Vibrio splendidus (strain Mel32)</name>
    <dbReference type="NCBI Taxonomy" id="575788"/>
    <lineage>
        <taxon>Bacteria</taxon>
        <taxon>Pseudomonadati</taxon>
        <taxon>Pseudomonadota</taxon>
        <taxon>Gammaproteobacteria</taxon>
        <taxon>Vibrionales</taxon>
        <taxon>Vibrionaceae</taxon>
        <taxon>Vibrio</taxon>
    </lineage>
</organism>
<reference key="1">
    <citation type="submission" date="2009-02" db="EMBL/GenBank/DDBJ databases">
        <title>Vibrio splendidus str. LGP32 complete genome.</title>
        <authorList>
            <person name="Mazel D."/>
            <person name="Le Roux F."/>
        </authorList>
    </citation>
    <scope>NUCLEOTIDE SEQUENCE [LARGE SCALE GENOMIC DNA]</scope>
    <source>
        <strain>LGP32</strain>
    </source>
</reference>
<evidence type="ECO:0000255" key="1">
    <source>
        <dbReference type="HAMAP-Rule" id="MF_00033"/>
    </source>
</evidence>
<dbReference type="EC" id="2.4.1.227" evidence="1"/>
<dbReference type="EMBL" id="FM954972">
    <property type="protein sequence ID" value="CAV17457.1"/>
    <property type="molecule type" value="Genomic_DNA"/>
</dbReference>
<dbReference type="SMR" id="B7VJ03"/>
<dbReference type="STRING" id="575788.VS_0450"/>
<dbReference type="CAZy" id="GT28">
    <property type="family name" value="Glycosyltransferase Family 28"/>
</dbReference>
<dbReference type="KEGG" id="vsp:VS_0450"/>
<dbReference type="PATRIC" id="fig|575788.5.peg.1816"/>
<dbReference type="eggNOG" id="COG0707">
    <property type="taxonomic scope" value="Bacteria"/>
</dbReference>
<dbReference type="HOGENOM" id="CLU_037404_2_0_6"/>
<dbReference type="UniPathway" id="UPA00219"/>
<dbReference type="Proteomes" id="UP000009100">
    <property type="component" value="Chromosome 1"/>
</dbReference>
<dbReference type="GO" id="GO:0005886">
    <property type="term" value="C:plasma membrane"/>
    <property type="evidence" value="ECO:0007669"/>
    <property type="project" value="UniProtKB-SubCell"/>
</dbReference>
<dbReference type="GO" id="GO:0051991">
    <property type="term" value="F:UDP-N-acetyl-D-glucosamine:N-acetylmuramoyl-L-alanyl-D-glutamyl-meso-2,6-diaminopimelyl-D-alanyl-D-alanine-diphosphoundecaprenol 4-beta-N-acetylglucosaminlytransferase activity"/>
    <property type="evidence" value="ECO:0007669"/>
    <property type="project" value="RHEA"/>
</dbReference>
<dbReference type="GO" id="GO:0050511">
    <property type="term" value="F:undecaprenyldiphospho-muramoylpentapeptide beta-N-acetylglucosaminyltransferase activity"/>
    <property type="evidence" value="ECO:0007669"/>
    <property type="project" value="UniProtKB-UniRule"/>
</dbReference>
<dbReference type="GO" id="GO:0005975">
    <property type="term" value="P:carbohydrate metabolic process"/>
    <property type="evidence" value="ECO:0007669"/>
    <property type="project" value="InterPro"/>
</dbReference>
<dbReference type="GO" id="GO:0051301">
    <property type="term" value="P:cell division"/>
    <property type="evidence" value="ECO:0007669"/>
    <property type="project" value="UniProtKB-KW"/>
</dbReference>
<dbReference type="GO" id="GO:0071555">
    <property type="term" value="P:cell wall organization"/>
    <property type="evidence" value="ECO:0007669"/>
    <property type="project" value="UniProtKB-KW"/>
</dbReference>
<dbReference type="GO" id="GO:0030259">
    <property type="term" value="P:lipid glycosylation"/>
    <property type="evidence" value="ECO:0007669"/>
    <property type="project" value="UniProtKB-UniRule"/>
</dbReference>
<dbReference type="GO" id="GO:0009252">
    <property type="term" value="P:peptidoglycan biosynthetic process"/>
    <property type="evidence" value="ECO:0007669"/>
    <property type="project" value="UniProtKB-UniRule"/>
</dbReference>
<dbReference type="GO" id="GO:0008360">
    <property type="term" value="P:regulation of cell shape"/>
    <property type="evidence" value="ECO:0007669"/>
    <property type="project" value="UniProtKB-KW"/>
</dbReference>
<dbReference type="CDD" id="cd03785">
    <property type="entry name" value="GT28_MurG"/>
    <property type="match status" value="1"/>
</dbReference>
<dbReference type="Gene3D" id="3.40.50.2000">
    <property type="entry name" value="Glycogen Phosphorylase B"/>
    <property type="match status" value="2"/>
</dbReference>
<dbReference type="HAMAP" id="MF_00033">
    <property type="entry name" value="MurG"/>
    <property type="match status" value="1"/>
</dbReference>
<dbReference type="InterPro" id="IPR006009">
    <property type="entry name" value="GlcNAc_MurG"/>
</dbReference>
<dbReference type="InterPro" id="IPR007235">
    <property type="entry name" value="Glyco_trans_28_C"/>
</dbReference>
<dbReference type="InterPro" id="IPR004276">
    <property type="entry name" value="GlycoTrans_28_N"/>
</dbReference>
<dbReference type="NCBIfam" id="TIGR01133">
    <property type="entry name" value="murG"/>
    <property type="match status" value="1"/>
</dbReference>
<dbReference type="PANTHER" id="PTHR21015:SF22">
    <property type="entry name" value="GLYCOSYLTRANSFERASE"/>
    <property type="match status" value="1"/>
</dbReference>
<dbReference type="PANTHER" id="PTHR21015">
    <property type="entry name" value="UDP-N-ACETYLGLUCOSAMINE--N-ACETYLMURAMYL-(PENTAPEPTIDE) PYROPHOSPHORYL-UNDECAPRENOL N-ACETYLGLUCOSAMINE TRANSFERASE 1"/>
    <property type="match status" value="1"/>
</dbReference>
<dbReference type="Pfam" id="PF04101">
    <property type="entry name" value="Glyco_tran_28_C"/>
    <property type="match status" value="1"/>
</dbReference>
<dbReference type="Pfam" id="PF03033">
    <property type="entry name" value="Glyco_transf_28"/>
    <property type="match status" value="1"/>
</dbReference>
<dbReference type="SUPFAM" id="SSF53756">
    <property type="entry name" value="UDP-Glycosyltransferase/glycogen phosphorylase"/>
    <property type="match status" value="1"/>
</dbReference>